<feature type="chain" id="PRO_0000248096" description="Nucleoside triphosphate/diphosphate phosphatase">
    <location>
        <begin position="1"/>
        <end position="176"/>
    </location>
</feature>
<feature type="active site" description="Proton donor" evidence="1">
    <location>
        <position position="23"/>
    </location>
</feature>
<feature type="binding site" evidence="1">
    <location>
        <position position="87"/>
    </location>
    <ligand>
        <name>Mg(2+)</name>
        <dbReference type="ChEBI" id="CHEBI:18420"/>
        <label>1</label>
    </ligand>
</feature>
<feature type="binding site" evidence="1">
    <location>
        <position position="103"/>
    </location>
    <ligand>
        <name>Mg(2+)</name>
        <dbReference type="ChEBI" id="CHEBI:18420"/>
        <label>1</label>
    </ligand>
</feature>
<feature type="binding site" evidence="1">
    <location>
        <position position="105"/>
    </location>
    <ligand>
        <name>Mg(2+)</name>
        <dbReference type="ChEBI" id="CHEBI:18420"/>
        <label>2</label>
    </ligand>
</feature>
<feature type="binding site" evidence="1">
    <location>
        <position position="107"/>
    </location>
    <ligand>
        <name>Mg(2+)</name>
        <dbReference type="ChEBI" id="CHEBI:18420"/>
        <label>1</label>
    </ligand>
</feature>
<feature type="binding site" evidence="1">
    <location>
        <position position="107"/>
    </location>
    <ligand>
        <name>Mg(2+)</name>
        <dbReference type="ChEBI" id="CHEBI:18420"/>
        <label>2</label>
    </ligand>
</feature>
<feature type="binding site" evidence="1">
    <location>
        <position position="120"/>
    </location>
    <ligand>
        <name>Mg(2+)</name>
        <dbReference type="ChEBI" id="CHEBI:18420"/>
        <label>2</label>
    </ligand>
</feature>
<feature type="binding site" evidence="1">
    <location>
        <position position="123"/>
    </location>
    <ligand>
        <name>Mg(2+)</name>
        <dbReference type="ChEBI" id="CHEBI:18420"/>
        <label>2</label>
    </ligand>
</feature>
<comment type="function">
    <text evidence="1">Has nucleoside phosphatase activity towards nucleoside triphosphates and nucleoside diphosphates.</text>
</comment>
<comment type="catalytic activity">
    <reaction evidence="1">
        <text>a ribonucleoside 5'-triphosphate + H2O = a ribonucleoside 5'-diphosphate + phosphate + H(+)</text>
        <dbReference type="Rhea" id="RHEA:23680"/>
        <dbReference type="ChEBI" id="CHEBI:15377"/>
        <dbReference type="ChEBI" id="CHEBI:15378"/>
        <dbReference type="ChEBI" id="CHEBI:43474"/>
        <dbReference type="ChEBI" id="CHEBI:57930"/>
        <dbReference type="ChEBI" id="CHEBI:61557"/>
        <dbReference type="EC" id="3.6.1.15"/>
    </reaction>
</comment>
<comment type="catalytic activity">
    <reaction evidence="1">
        <text>a ribonucleoside 5'-diphosphate + H2O = a ribonucleoside 5'-phosphate + phosphate + H(+)</text>
        <dbReference type="Rhea" id="RHEA:36799"/>
        <dbReference type="ChEBI" id="CHEBI:15377"/>
        <dbReference type="ChEBI" id="CHEBI:15378"/>
        <dbReference type="ChEBI" id="CHEBI:43474"/>
        <dbReference type="ChEBI" id="CHEBI:57930"/>
        <dbReference type="ChEBI" id="CHEBI:58043"/>
        <dbReference type="EC" id="3.6.1.6"/>
    </reaction>
</comment>
<comment type="cofactor">
    <cofactor evidence="1">
        <name>Mg(2+)</name>
        <dbReference type="ChEBI" id="CHEBI:18420"/>
    </cofactor>
</comment>
<comment type="similarity">
    <text evidence="1">Belongs to the Ntdp family.</text>
</comment>
<sequence length="176" mass="21371">MKIPKEGDFITIQSYKHDGNLHRTWRDTMVLKTNENSIIGVNDHTLVTESDDRRWVTREPAIVYFHKKFWFNIIAMIREEGVSYYCNLASPFVLDNEALKYIDYDLDVKVFKDGEKKLLDVEEYERHRRKMHYPKEIDHILKENVKILVDWINNEKGPFSKEYVEIWYNRYHQLKK</sequence>
<keyword id="KW-0378">Hydrolase</keyword>
<keyword id="KW-0460">Magnesium</keyword>
<keyword id="KW-0479">Metal-binding</keyword>
<keyword id="KW-1185">Reference proteome</keyword>
<accession>Q9CGX3</accession>
<gene>
    <name type="primary">yjjG</name>
    <name type="ordered locus">LL0969</name>
    <name type="ORF">L196206</name>
</gene>
<reference key="1">
    <citation type="journal article" date="2001" name="Genome Res.">
        <title>The complete genome sequence of the lactic acid bacterium Lactococcus lactis ssp. lactis IL1403.</title>
        <authorList>
            <person name="Bolotin A."/>
            <person name="Wincker P."/>
            <person name="Mauger S."/>
            <person name="Jaillon O."/>
            <person name="Malarme K."/>
            <person name="Weissenbach J."/>
            <person name="Ehrlich S.D."/>
            <person name="Sorokin A."/>
        </authorList>
    </citation>
    <scope>NUCLEOTIDE SEQUENCE [LARGE SCALE GENOMIC DNA]</scope>
    <source>
        <strain>IL1403</strain>
    </source>
</reference>
<organism>
    <name type="scientific">Lactococcus lactis subsp. lactis (strain IL1403)</name>
    <name type="common">Streptococcus lactis</name>
    <dbReference type="NCBI Taxonomy" id="272623"/>
    <lineage>
        <taxon>Bacteria</taxon>
        <taxon>Bacillati</taxon>
        <taxon>Bacillota</taxon>
        <taxon>Bacilli</taxon>
        <taxon>Lactobacillales</taxon>
        <taxon>Streptococcaceae</taxon>
        <taxon>Lactococcus</taxon>
    </lineage>
</organism>
<name>NTDP_LACLA</name>
<evidence type="ECO:0000255" key="1">
    <source>
        <dbReference type="HAMAP-Rule" id="MF_01568"/>
    </source>
</evidence>
<proteinExistence type="inferred from homology"/>
<protein>
    <recommendedName>
        <fullName evidence="1">Nucleoside triphosphate/diphosphate phosphatase</fullName>
        <ecNumber evidence="1">3.6.1.15</ecNumber>
        <ecNumber evidence="1">3.6.1.6</ecNumber>
    </recommendedName>
</protein>
<dbReference type="EC" id="3.6.1.15" evidence="1"/>
<dbReference type="EC" id="3.6.1.6" evidence="1"/>
<dbReference type="EMBL" id="AE005176">
    <property type="protein sequence ID" value="AAK05067.1"/>
    <property type="molecule type" value="Genomic_DNA"/>
</dbReference>
<dbReference type="PIR" id="A86746">
    <property type="entry name" value="A86746"/>
</dbReference>
<dbReference type="RefSeq" id="NP_267125.1">
    <property type="nucleotide sequence ID" value="NC_002662.1"/>
</dbReference>
<dbReference type="RefSeq" id="WP_003130958.1">
    <property type="nucleotide sequence ID" value="NC_002662.1"/>
</dbReference>
<dbReference type="SMR" id="Q9CGX3"/>
<dbReference type="PaxDb" id="272623-L196206"/>
<dbReference type="EnsemblBacteria" id="AAK05067">
    <property type="protein sequence ID" value="AAK05067"/>
    <property type="gene ID" value="L196206"/>
</dbReference>
<dbReference type="KEGG" id="lla:L196206"/>
<dbReference type="PATRIC" id="fig|272623.7.peg.1036"/>
<dbReference type="eggNOG" id="COG3557">
    <property type="taxonomic scope" value="Bacteria"/>
</dbReference>
<dbReference type="HOGENOM" id="CLU_109787_1_0_9"/>
<dbReference type="OrthoDB" id="1645325at2"/>
<dbReference type="Proteomes" id="UP000002196">
    <property type="component" value="Chromosome"/>
</dbReference>
<dbReference type="GO" id="GO:0000287">
    <property type="term" value="F:magnesium ion binding"/>
    <property type="evidence" value="ECO:0007669"/>
    <property type="project" value="UniProtKB-UniRule"/>
</dbReference>
<dbReference type="GO" id="GO:0017110">
    <property type="term" value="F:nucleoside diphosphate phosphatase activity"/>
    <property type="evidence" value="ECO:0007669"/>
    <property type="project" value="UniProtKB-UniRule"/>
</dbReference>
<dbReference type="GO" id="GO:0017111">
    <property type="term" value="F:ribonucleoside triphosphate phosphatase activity"/>
    <property type="evidence" value="ECO:0007669"/>
    <property type="project" value="UniProtKB-UniRule"/>
</dbReference>
<dbReference type="Gene3D" id="2.40.380.10">
    <property type="entry name" value="FomD-like"/>
    <property type="match status" value="1"/>
</dbReference>
<dbReference type="HAMAP" id="MF_01568">
    <property type="entry name" value="Ntdp"/>
    <property type="match status" value="1"/>
</dbReference>
<dbReference type="InterPro" id="IPR007295">
    <property type="entry name" value="DUF402"/>
</dbReference>
<dbReference type="InterPro" id="IPR035930">
    <property type="entry name" value="FomD-like_sf"/>
</dbReference>
<dbReference type="InterPro" id="IPR050212">
    <property type="entry name" value="Ntdp-like"/>
</dbReference>
<dbReference type="InterPro" id="IPR016882">
    <property type="entry name" value="SA1684"/>
</dbReference>
<dbReference type="NCBIfam" id="NF010183">
    <property type="entry name" value="PRK13662.1"/>
    <property type="match status" value="1"/>
</dbReference>
<dbReference type="PANTHER" id="PTHR39159">
    <property type="match status" value="1"/>
</dbReference>
<dbReference type="PANTHER" id="PTHR39159:SF1">
    <property type="entry name" value="UPF0374 PROTEIN YGAC"/>
    <property type="match status" value="1"/>
</dbReference>
<dbReference type="Pfam" id="PF04167">
    <property type="entry name" value="DUF402"/>
    <property type="match status" value="1"/>
</dbReference>
<dbReference type="PIRSF" id="PIRSF028345">
    <property type="entry name" value="UCP028345"/>
    <property type="match status" value="1"/>
</dbReference>
<dbReference type="SUPFAM" id="SSF159234">
    <property type="entry name" value="FomD-like"/>
    <property type="match status" value="1"/>
</dbReference>